<evidence type="ECO:0000255" key="1">
    <source>
        <dbReference type="HAMAP-Rule" id="MF_00181"/>
    </source>
</evidence>
<comment type="function">
    <text evidence="1">Presumably involved in the processing and regular turnover of intracellular proteins. Catalyzes the removal of unsubstituted N-terminal amino acids from various peptides.</text>
</comment>
<comment type="catalytic activity">
    <reaction evidence="1">
        <text>Release of an N-terminal amino acid, Xaa-|-Yaa-, in which Xaa is preferably Leu, but may be other amino acids including Pro although not Arg or Lys, and Yaa may be Pro. Amino acid amides and methyl esters are also readily hydrolyzed, but rates on arylamides are exceedingly low.</text>
        <dbReference type="EC" id="3.4.11.1"/>
    </reaction>
</comment>
<comment type="catalytic activity">
    <reaction evidence="1">
        <text>Release of an N-terminal amino acid, preferentially leucine, but not glutamic or aspartic acids.</text>
        <dbReference type="EC" id="3.4.11.10"/>
    </reaction>
</comment>
<comment type="cofactor">
    <cofactor evidence="1">
        <name>Mn(2+)</name>
        <dbReference type="ChEBI" id="CHEBI:29035"/>
    </cofactor>
    <text evidence="1">Binds 2 manganese ions per subunit.</text>
</comment>
<comment type="subcellular location">
    <subcellularLocation>
        <location evidence="1">Cytoplasm</location>
    </subcellularLocation>
</comment>
<comment type="similarity">
    <text evidence="1">Belongs to the peptidase M17 family.</text>
</comment>
<feature type="chain" id="PRO_1000098348" description="Probable cytosol aminopeptidase">
    <location>
        <begin position="1"/>
        <end position="503"/>
    </location>
</feature>
<feature type="active site" evidence="1">
    <location>
        <position position="282"/>
    </location>
</feature>
<feature type="active site" evidence="1">
    <location>
        <position position="356"/>
    </location>
</feature>
<feature type="binding site" evidence="1">
    <location>
        <position position="270"/>
    </location>
    <ligand>
        <name>Mn(2+)</name>
        <dbReference type="ChEBI" id="CHEBI:29035"/>
        <label>2</label>
    </ligand>
</feature>
<feature type="binding site" evidence="1">
    <location>
        <position position="275"/>
    </location>
    <ligand>
        <name>Mn(2+)</name>
        <dbReference type="ChEBI" id="CHEBI:29035"/>
        <label>1</label>
    </ligand>
</feature>
<feature type="binding site" evidence="1">
    <location>
        <position position="275"/>
    </location>
    <ligand>
        <name>Mn(2+)</name>
        <dbReference type="ChEBI" id="CHEBI:29035"/>
        <label>2</label>
    </ligand>
</feature>
<feature type="binding site" evidence="1">
    <location>
        <position position="293"/>
    </location>
    <ligand>
        <name>Mn(2+)</name>
        <dbReference type="ChEBI" id="CHEBI:29035"/>
        <label>2</label>
    </ligand>
</feature>
<feature type="binding site" evidence="1">
    <location>
        <position position="352"/>
    </location>
    <ligand>
        <name>Mn(2+)</name>
        <dbReference type="ChEBI" id="CHEBI:29035"/>
        <label>1</label>
    </ligand>
</feature>
<feature type="binding site" evidence="1">
    <location>
        <position position="354"/>
    </location>
    <ligand>
        <name>Mn(2+)</name>
        <dbReference type="ChEBI" id="CHEBI:29035"/>
        <label>1</label>
    </ligand>
</feature>
<feature type="binding site" evidence="1">
    <location>
        <position position="354"/>
    </location>
    <ligand>
        <name>Mn(2+)</name>
        <dbReference type="ChEBI" id="CHEBI:29035"/>
        <label>2</label>
    </ligand>
</feature>
<gene>
    <name evidence="1" type="primary">pepA</name>
    <name type="ordered locus">SNSL254_A4826</name>
</gene>
<dbReference type="EC" id="3.4.11.1" evidence="1"/>
<dbReference type="EC" id="3.4.11.10" evidence="1"/>
<dbReference type="EMBL" id="CP001113">
    <property type="protein sequence ID" value="ACF63796.1"/>
    <property type="molecule type" value="Genomic_DNA"/>
</dbReference>
<dbReference type="RefSeq" id="WP_000397158.1">
    <property type="nucleotide sequence ID" value="NZ_CCMR01000003.1"/>
</dbReference>
<dbReference type="SMR" id="B4T3M4"/>
<dbReference type="MEROPS" id="M17.003"/>
<dbReference type="KEGG" id="see:SNSL254_A4826"/>
<dbReference type="HOGENOM" id="CLU_013734_2_2_6"/>
<dbReference type="Proteomes" id="UP000008824">
    <property type="component" value="Chromosome"/>
</dbReference>
<dbReference type="GO" id="GO:0005737">
    <property type="term" value="C:cytoplasm"/>
    <property type="evidence" value="ECO:0007669"/>
    <property type="project" value="UniProtKB-SubCell"/>
</dbReference>
<dbReference type="GO" id="GO:0030145">
    <property type="term" value="F:manganese ion binding"/>
    <property type="evidence" value="ECO:0007669"/>
    <property type="project" value="UniProtKB-UniRule"/>
</dbReference>
<dbReference type="GO" id="GO:0070006">
    <property type="term" value="F:metalloaminopeptidase activity"/>
    <property type="evidence" value="ECO:0007669"/>
    <property type="project" value="InterPro"/>
</dbReference>
<dbReference type="GO" id="GO:0006508">
    <property type="term" value="P:proteolysis"/>
    <property type="evidence" value="ECO:0007669"/>
    <property type="project" value="UniProtKB-KW"/>
</dbReference>
<dbReference type="CDD" id="cd00433">
    <property type="entry name" value="Peptidase_M17"/>
    <property type="match status" value="1"/>
</dbReference>
<dbReference type="FunFam" id="3.40.220.10:FF:000001">
    <property type="entry name" value="Probable cytosol aminopeptidase"/>
    <property type="match status" value="1"/>
</dbReference>
<dbReference type="FunFam" id="3.40.630.10:FF:000004">
    <property type="entry name" value="Probable cytosol aminopeptidase"/>
    <property type="match status" value="1"/>
</dbReference>
<dbReference type="Gene3D" id="3.40.220.10">
    <property type="entry name" value="Leucine Aminopeptidase, subunit E, domain 1"/>
    <property type="match status" value="1"/>
</dbReference>
<dbReference type="Gene3D" id="3.40.630.10">
    <property type="entry name" value="Zn peptidases"/>
    <property type="match status" value="1"/>
</dbReference>
<dbReference type="HAMAP" id="MF_00181">
    <property type="entry name" value="Cytosol_peptidase_M17"/>
    <property type="match status" value="1"/>
</dbReference>
<dbReference type="InterPro" id="IPR011356">
    <property type="entry name" value="Leucine_aapep/pepB"/>
</dbReference>
<dbReference type="InterPro" id="IPR043472">
    <property type="entry name" value="Macro_dom-like"/>
</dbReference>
<dbReference type="InterPro" id="IPR000819">
    <property type="entry name" value="Peptidase_M17_C"/>
</dbReference>
<dbReference type="InterPro" id="IPR023042">
    <property type="entry name" value="Peptidase_M17_leu_NH2_pept"/>
</dbReference>
<dbReference type="InterPro" id="IPR008283">
    <property type="entry name" value="Peptidase_M17_N"/>
</dbReference>
<dbReference type="NCBIfam" id="NF002072">
    <property type="entry name" value="PRK00913.1-1"/>
    <property type="match status" value="1"/>
</dbReference>
<dbReference type="NCBIfam" id="NF002073">
    <property type="entry name" value="PRK00913.1-2"/>
    <property type="match status" value="1"/>
</dbReference>
<dbReference type="NCBIfam" id="NF002074">
    <property type="entry name" value="PRK00913.1-4"/>
    <property type="match status" value="1"/>
</dbReference>
<dbReference type="PANTHER" id="PTHR11963:SF23">
    <property type="entry name" value="CYTOSOL AMINOPEPTIDASE"/>
    <property type="match status" value="1"/>
</dbReference>
<dbReference type="PANTHER" id="PTHR11963">
    <property type="entry name" value="LEUCINE AMINOPEPTIDASE-RELATED"/>
    <property type="match status" value="1"/>
</dbReference>
<dbReference type="Pfam" id="PF00883">
    <property type="entry name" value="Peptidase_M17"/>
    <property type="match status" value="1"/>
</dbReference>
<dbReference type="Pfam" id="PF02789">
    <property type="entry name" value="Peptidase_M17_N"/>
    <property type="match status" value="1"/>
</dbReference>
<dbReference type="PRINTS" id="PR00481">
    <property type="entry name" value="LAMNOPPTDASE"/>
</dbReference>
<dbReference type="SUPFAM" id="SSF52949">
    <property type="entry name" value="Macro domain-like"/>
    <property type="match status" value="1"/>
</dbReference>
<dbReference type="SUPFAM" id="SSF53187">
    <property type="entry name" value="Zn-dependent exopeptidases"/>
    <property type="match status" value="1"/>
</dbReference>
<dbReference type="PROSITE" id="PS00631">
    <property type="entry name" value="CYTOSOL_AP"/>
    <property type="match status" value="1"/>
</dbReference>
<organism>
    <name type="scientific">Salmonella newport (strain SL254)</name>
    <dbReference type="NCBI Taxonomy" id="423368"/>
    <lineage>
        <taxon>Bacteria</taxon>
        <taxon>Pseudomonadati</taxon>
        <taxon>Pseudomonadota</taxon>
        <taxon>Gammaproteobacteria</taxon>
        <taxon>Enterobacterales</taxon>
        <taxon>Enterobacteriaceae</taxon>
        <taxon>Salmonella</taxon>
    </lineage>
</organism>
<proteinExistence type="inferred from homology"/>
<name>AMPA_SALNS</name>
<sequence length="503" mass="54890">MEFSVKSGSPEKQRSACIVVGVFEPRRLSPIAEQLDKISDGYISALLRRGELEGKPGQTLLLHHVPNVLSERILLIGCGKERELDERQYKQVIQKTINTLNDTGSMEAVCFLTELHVKGRNNYWKVRQAVETAKETLYSFDQLKTNKSEPRRPLRKMVFNVPTRRELTSGERAIQHGLAIAAGIKAAKDLGNMPPNICNAAYLASQARQLADSYSKNVITRVIGEQQMRELGMNAYLAVGHGSQNESLMSVIEYKGNPSEDARPIVLVGKGLTFDSGGISIKPSEGMDEMKYDMCGAAAVYGVMRMVAELQLPINVIGVLAGCENMPGGRAYRPGDVLTTMSGQTVEVLNTDAEGRLVLCDVLTYVERFEPEAVIDVATLTGACVIALGHHITGLMSNHNPLAHELIGASEQAGDRAWRLPLGDEFQEQLESNFADMANIGGRPGGAITAGCFLSRFTRKYNWAHLDIAGTAWRSGKAKGATGRPVALLSQFLLNRAGFNGEE</sequence>
<reference key="1">
    <citation type="journal article" date="2011" name="J. Bacteriol.">
        <title>Comparative genomics of 28 Salmonella enterica isolates: evidence for CRISPR-mediated adaptive sublineage evolution.</title>
        <authorList>
            <person name="Fricke W.F."/>
            <person name="Mammel M.K."/>
            <person name="McDermott P.F."/>
            <person name="Tartera C."/>
            <person name="White D.G."/>
            <person name="Leclerc J.E."/>
            <person name="Ravel J."/>
            <person name="Cebula T.A."/>
        </authorList>
    </citation>
    <scope>NUCLEOTIDE SEQUENCE [LARGE SCALE GENOMIC DNA]</scope>
    <source>
        <strain>SL254</strain>
    </source>
</reference>
<keyword id="KW-0031">Aminopeptidase</keyword>
<keyword id="KW-0963">Cytoplasm</keyword>
<keyword id="KW-0378">Hydrolase</keyword>
<keyword id="KW-0464">Manganese</keyword>
<keyword id="KW-0479">Metal-binding</keyword>
<keyword id="KW-0645">Protease</keyword>
<protein>
    <recommendedName>
        <fullName evidence="1">Probable cytosol aminopeptidase</fullName>
        <ecNumber evidence="1">3.4.11.1</ecNumber>
    </recommendedName>
    <alternativeName>
        <fullName evidence="1">Leucine aminopeptidase</fullName>
        <shortName evidence="1">LAP</shortName>
        <ecNumber evidence="1">3.4.11.10</ecNumber>
    </alternativeName>
    <alternativeName>
        <fullName evidence="1">Leucyl aminopeptidase</fullName>
    </alternativeName>
</protein>
<accession>B4T3M4</accession>